<accession>Q0K619</accession>
<feature type="chain" id="PRO_1000052119" description="Large ribosomal subunit protein uL3">
    <location>
        <begin position="1"/>
        <end position="216"/>
    </location>
</feature>
<feature type="region of interest" description="Disordered" evidence="2">
    <location>
        <begin position="134"/>
        <end position="153"/>
    </location>
</feature>
<feature type="modified residue" description="N5-methylglutamine" evidence="1">
    <location>
        <position position="153"/>
    </location>
</feature>
<keyword id="KW-0488">Methylation</keyword>
<keyword id="KW-1185">Reference proteome</keyword>
<keyword id="KW-0687">Ribonucleoprotein</keyword>
<keyword id="KW-0689">Ribosomal protein</keyword>
<keyword id="KW-0694">RNA-binding</keyword>
<keyword id="KW-0699">rRNA-binding</keyword>
<dbReference type="EMBL" id="AM260479">
    <property type="protein sequence ID" value="CAJ94552.1"/>
    <property type="molecule type" value="Genomic_DNA"/>
</dbReference>
<dbReference type="RefSeq" id="WP_010812397.1">
    <property type="nucleotide sequence ID" value="NZ_CP039287.1"/>
</dbReference>
<dbReference type="SMR" id="Q0K619"/>
<dbReference type="STRING" id="381666.H16_A3484"/>
<dbReference type="GeneID" id="29761773"/>
<dbReference type="KEGG" id="reh:H16_A3484"/>
<dbReference type="eggNOG" id="COG0087">
    <property type="taxonomic scope" value="Bacteria"/>
</dbReference>
<dbReference type="HOGENOM" id="CLU_044142_4_1_4"/>
<dbReference type="OrthoDB" id="9806135at2"/>
<dbReference type="Proteomes" id="UP000008210">
    <property type="component" value="Chromosome 1"/>
</dbReference>
<dbReference type="GO" id="GO:0022625">
    <property type="term" value="C:cytosolic large ribosomal subunit"/>
    <property type="evidence" value="ECO:0007669"/>
    <property type="project" value="TreeGrafter"/>
</dbReference>
<dbReference type="GO" id="GO:0019843">
    <property type="term" value="F:rRNA binding"/>
    <property type="evidence" value="ECO:0007669"/>
    <property type="project" value="UniProtKB-UniRule"/>
</dbReference>
<dbReference type="GO" id="GO:0003735">
    <property type="term" value="F:structural constituent of ribosome"/>
    <property type="evidence" value="ECO:0007669"/>
    <property type="project" value="InterPro"/>
</dbReference>
<dbReference type="GO" id="GO:0006412">
    <property type="term" value="P:translation"/>
    <property type="evidence" value="ECO:0007669"/>
    <property type="project" value="UniProtKB-UniRule"/>
</dbReference>
<dbReference type="FunFam" id="2.40.30.10:FF:000004">
    <property type="entry name" value="50S ribosomal protein L3"/>
    <property type="match status" value="1"/>
</dbReference>
<dbReference type="FunFam" id="3.30.160.810:FF:000001">
    <property type="entry name" value="50S ribosomal protein L3"/>
    <property type="match status" value="1"/>
</dbReference>
<dbReference type="Gene3D" id="3.30.160.810">
    <property type="match status" value="1"/>
</dbReference>
<dbReference type="Gene3D" id="2.40.30.10">
    <property type="entry name" value="Translation factors"/>
    <property type="match status" value="1"/>
</dbReference>
<dbReference type="HAMAP" id="MF_01325_B">
    <property type="entry name" value="Ribosomal_uL3_B"/>
    <property type="match status" value="1"/>
</dbReference>
<dbReference type="InterPro" id="IPR000597">
    <property type="entry name" value="Ribosomal_uL3"/>
</dbReference>
<dbReference type="InterPro" id="IPR019927">
    <property type="entry name" value="Ribosomal_uL3_bac/org-type"/>
</dbReference>
<dbReference type="InterPro" id="IPR019926">
    <property type="entry name" value="Ribosomal_uL3_CS"/>
</dbReference>
<dbReference type="InterPro" id="IPR009000">
    <property type="entry name" value="Transl_B-barrel_sf"/>
</dbReference>
<dbReference type="NCBIfam" id="TIGR03625">
    <property type="entry name" value="L3_bact"/>
    <property type="match status" value="1"/>
</dbReference>
<dbReference type="PANTHER" id="PTHR11229">
    <property type="entry name" value="50S RIBOSOMAL PROTEIN L3"/>
    <property type="match status" value="1"/>
</dbReference>
<dbReference type="PANTHER" id="PTHR11229:SF16">
    <property type="entry name" value="LARGE RIBOSOMAL SUBUNIT PROTEIN UL3C"/>
    <property type="match status" value="1"/>
</dbReference>
<dbReference type="Pfam" id="PF00297">
    <property type="entry name" value="Ribosomal_L3"/>
    <property type="match status" value="1"/>
</dbReference>
<dbReference type="SUPFAM" id="SSF50447">
    <property type="entry name" value="Translation proteins"/>
    <property type="match status" value="1"/>
</dbReference>
<dbReference type="PROSITE" id="PS00474">
    <property type="entry name" value="RIBOSOMAL_L3"/>
    <property type="match status" value="1"/>
</dbReference>
<name>RL3_CUPNH</name>
<organism>
    <name type="scientific">Cupriavidus necator (strain ATCC 17699 / DSM 428 / KCTC 22496 / NCIMB 10442 / H16 / Stanier 337)</name>
    <name type="common">Ralstonia eutropha</name>
    <dbReference type="NCBI Taxonomy" id="381666"/>
    <lineage>
        <taxon>Bacteria</taxon>
        <taxon>Pseudomonadati</taxon>
        <taxon>Pseudomonadota</taxon>
        <taxon>Betaproteobacteria</taxon>
        <taxon>Burkholderiales</taxon>
        <taxon>Burkholderiaceae</taxon>
        <taxon>Cupriavidus</taxon>
    </lineage>
</organism>
<sequence length="216" mass="22754">MSLGLVGRKVGMTRIFTDDGEAIPVTVVEVGDNRVTQIKTDETDGYTAVQVTFGARRASRVTKPLAGHLAKAGVEAGEIIREFRIDAAKAAELQAGGSLSVDLFEVGQKIDVQGVTIGKGYAGTIKRYHFASGRATHGNSRSHNVPGSIGMAQDPGRVFPGKRMTGHLGDVTRTVQNLEIAKIDAERKLLLVKGAIPGSKNGKVIVTPAVKAKAKA</sequence>
<proteinExistence type="inferred from homology"/>
<protein>
    <recommendedName>
        <fullName evidence="1">Large ribosomal subunit protein uL3</fullName>
    </recommendedName>
    <alternativeName>
        <fullName evidence="3">50S ribosomal protein L3</fullName>
    </alternativeName>
</protein>
<comment type="function">
    <text evidence="1">One of the primary rRNA binding proteins, it binds directly near the 3'-end of the 23S rRNA, where it nucleates assembly of the 50S subunit.</text>
</comment>
<comment type="subunit">
    <text evidence="1">Part of the 50S ribosomal subunit. Forms a cluster with proteins L14 and L19.</text>
</comment>
<comment type="PTM">
    <text evidence="1">Methylated by PrmB.</text>
</comment>
<comment type="similarity">
    <text evidence="1">Belongs to the universal ribosomal protein uL3 family.</text>
</comment>
<gene>
    <name evidence="1" type="primary">rplC</name>
    <name type="ordered locus">H16_A3484</name>
</gene>
<evidence type="ECO:0000255" key="1">
    <source>
        <dbReference type="HAMAP-Rule" id="MF_01325"/>
    </source>
</evidence>
<evidence type="ECO:0000256" key="2">
    <source>
        <dbReference type="SAM" id="MobiDB-lite"/>
    </source>
</evidence>
<evidence type="ECO:0000305" key="3"/>
<reference key="1">
    <citation type="journal article" date="2006" name="Nat. Biotechnol.">
        <title>Genome sequence of the bioplastic-producing 'Knallgas' bacterium Ralstonia eutropha H16.</title>
        <authorList>
            <person name="Pohlmann A."/>
            <person name="Fricke W.F."/>
            <person name="Reinecke F."/>
            <person name="Kusian B."/>
            <person name="Liesegang H."/>
            <person name="Cramm R."/>
            <person name="Eitinger T."/>
            <person name="Ewering C."/>
            <person name="Poetter M."/>
            <person name="Schwartz E."/>
            <person name="Strittmatter A."/>
            <person name="Voss I."/>
            <person name="Gottschalk G."/>
            <person name="Steinbuechel A."/>
            <person name="Friedrich B."/>
            <person name="Bowien B."/>
        </authorList>
    </citation>
    <scope>NUCLEOTIDE SEQUENCE [LARGE SCALE GENOMIC DNA]</scope>
    <source>
        <strain>ATCC 17699 / DSM 428 / KCTC 22496 / NCIMB 10442 / H16 / Stanier 337</strain>
    </source>
</reference>